<sequence>MKIAVVVFPGSNCDVDLYEALHSVCHADVEYVSHRQKSLAGFDAVMLPGGFSYGDYLRAGAIARFTNIMPAIIKMANEGKPVFGTCNGFQILTEAGLLPGGLKRNDSQRFVCKTVPLEVVNSHTLFTSHYQDHERIALPIAHADGSYYADEKTLDELEANNQVVFRYATENPNGSLHNIAGITNKHGNVLGMMPHPERAVETILGSTDGLRLFESLLENGRIKVEA</sequence>
<feature type="chain" id="PRO_1000124124" description="Phosphoribosylformylglycinamidine synthase subunit PurQ">
    <location>
        <begin position="1"/>
        <end position="226"/>
    </location>
</feature>
<feature type="domain" description="Glutamine amidotransferase type-1" evidence="1">
    <location>
        <begin position="2"/>
        <end position="226"/>
    </location>
</feature>
<feature type="active site" description="Nucleophile" evidence="1">
    <location>
        <position position="86"/>
    </location>
</feature>
<feature type="active site" evidence="1">
    <location>
        <position position="195"/>
    </location>
</feature>
<feature type="active site" evidence="1">
    <location>
        <position position="197"/>
    </location>
</feature>
<reference key="1">
    <citation type="journal article" date="2008" name="DNA Res.">
        <title>Comparative genome analysis of Lactobacillus reuteri and Lactobacillus fermentum reveal a genomic island for reuterin and cobalamin production.</title>
        <authorList>
            <person name="Morita H."/>
            <person name="Toh H."/>
            <person name="Fukuda S."/>
            <person name="Horikawa H."/>
            <person name="Oshima K."/>
            <person name="Suzuki T."/>
            <person name="Murakami M."/>
            <person name="Hisamatsu S."/>
            <person name="Kato Y."/>
            <person name="Takizawa T."/>
            <person name="Fukuoka H."/>
            <person name="Yoshimura T."/>
            <person name="Itoh K."/>
            <person name="O'Sullivan D.J."/>
            <person name="McKay L.L."/>
            <person name="Ohno H."/>
            <person name="Kikuchi J."/>
            <person name="Masaoka T."/>
            <person name="Hattori M."/>
        </authorList>
    </citation>
    <scope>NUCLEOTIDE SEQUENCE [LARGE SCALE GENOMIC DNA]</scope>
    <source>
        <strain>JCM 1112</strain>
    </source>
</reference>
<protein>
    <recommendedName>
        <fullName evidence="1">Phosphoribosylformylglycinamidine synthase subunit PurQ</fullName>
        <shortName evidence="1">FGAM synthase</shortName>
        <ecNumber evidence="1">6.3.5.3</ecNumber>
    </recommendedName>
    <alternativeName>
        <fullName evidence="1">Formylglycinamide ribonucleotide amidotransferase subunit I</fullName>
        <shortName evidence="1">FGAR amidotransferase I</shortName>
        <shortName evidence="1">FGAR-AT I</shortName>
    </alternativeName>
    <alternativeName>
        <fullName evidence="1">Glutaminase PurQ</fullName>
        <ecNumber evidence="1">3.5.1.2</ecNumber>
    </alternativeName>
    <alternativeName>
        <fullName evidence="1">Phosphoribosylformylglycinamidine synthase subunit I</fullName>
    </alternativeName>
</protein>
<keyword id="KW-0067">ATP-binding</keyword>
<keyword id="KW-0963">Cytoplasm</keyword>
<keyword id="KW-0315">Glutamine amidotransferase</keyword>
<keyword id="KW-0378">Hydrolase</keyword>
<keyword id="KW-0436">Ligase</keyword>
<keyword id="KW-0547">Nucleotide-binding</keyword>
<keyword id="KW-0658">Purine biosynthesis</keyword>
<evidence type="ECO:0000255" key="1">
    <source>
        <dbReference type="HAMAP-Rule" id="MF_00421"/>
    </source>
</evidence>
<proteinExistence type="inferred from homology"/>
<name>PURQ_LIMRJ</name>
<dbReference type="EC" id="6.3.5.3" evidence="1"/>
<dbReference type="EC" id="3.5.1.2" evidence="1"/>
<dbReference type="EMBL" id="AP007281">
    <property type="protein sequence ID" value="BAG24649.1"/>
    <property type="molecule type" value="Genomic_DNA"/>
</dbReference>
<dbReference type="RefSeq" id="WP_003669722.1">
    <property type="nucleotide sequence ID" value="NC_010609.1"/>
</dbReference>
<dbReference type="SMR" id="B2G5B7"/>
<dbReference type="KEGG" id="lrf:LAR_0133"/>
<dbReference type="HOGENOM" id="CLU_001031_3_1_9"/>
<dbReference type="UniPathway" id="UPA00074">
    <property type="reaction ID" value="UER00128"/>
</dbReference>
<dbReference type="GO" id="GO:0005737">
    <property type="term" value="C:cytoplasm"/>
    <property type="evidence" value="ECO:0007669"/>
    <property type="project" value="UniProtKB-SubCell"/>
</dbReference>
<dbReference type="GO" id="GO:0005524">
    <property type="term" value="F:ATP binding"/>
    <property type="evidence" value="ECO:0007669"/>
    <property type="project" value="UniProtKB-KW"/>
</dbReference>
<dbReference type="GO" id="GO:0004359">
    <property type="term" value="F:glutaminase activity"/>
    <property type="evidence" value="ECO:0007669"/>
    <property type="project" value="UniProtKB-EC"/>
</dbReference>
<dbReference type="GO" id="GO:0004642">
    <property type="term" value="F:phosphoribosylformylglycinamidine synthase activity"/>
    <property type="evidence" value="ECO:0007669"/>
    <property type="project" value="UniProtKB-UniRule"/>
</dbReference>
<dbReference type="GO" id="GO:0006189">
    <property type="term" value="P:'de novo' IMP biosynthetic process"/>
    <property type="evidence" value="ECO:0007669"/>
    <property type="project" value="UniProtKB-UniRule"/>
</dbReference>
<dbReference type="CDD" id="cd01740">
    <property type="entry name" value="GATase1_FGAR_AT"/>
    <property type="match status" value="1"/>
</dbReference>
<dbReference type="FunFam" id="3.40.50.880:FF:000019">
    <property type="entry name" value="Phosphoribosylformylglycinamidine synthase subunit PurQ"/>
    <property type="match status" value="1"/>
</dbReference>
<dbReference type="Gene3D" id="3.40.50.880">
    <property type="match status" value="1"/>
</dbReference>
<dbReference type="HAMAP" id="MF_00421">
    <property type="entry name" value="PurQ"/>
    <property type="match status" value="1"/>
</dbReference>
<dbReference type="InterPro" id="IPR029062">
    <property type="entry name" value="Class_I_gatase-like"/>
</dbReference>
<dbReference type="InterPro" id="IPR010075">
    <property type="entry name" value="PRibForGlyAmidine_synth_PurQ"/>
</dbReference>
<dbReference type="NCBIfam" id="TIGR01737">
    <property type="entry name" value="FGAM_synth_I"/>
    <property type="match status" value="1"/>
</dbReference>
<dbReference type="NCBIfam" id="NF002957">
    <property type="entry name" value="PRK03619.1"/>
    <property type="match status" value="1"/>
</dbReference>
<dbReference type="PANTHER" id="PTHR47552">
    <property type="entry name" value="PHOSPHORIBOSYLFORMYLGLYCINAMIDINE SYNTHASE SUBUNIT PURQ"/>
    <property type="match status" value="1"/>
</dbReference>
<dbReference type="PANTHER" id="PTHR47552:SF1">
    <property type="entry name" value="PHOSPHORIBOSYLFORMYLGLYCINAMIDINE SYNTHASE SUBUNIT PURQ"/>
    <property type="match status" value="1"/>
</dbReference>
<dbReference type="Pfam" id="PF13507">
    <property type="entry name" value="GATase_5"/>
    <property type="match status" value="1"/>
</dbReference>
<dbReference type="PIRSF" id="PIRSF001586">
    <property type="entry name" value="FGAM_synth_I"/>
    <property type="match status" value="1"/>
</dbReference>
<dbReference type="SMART" id="SM01211">
    <property type="entry name" value="GATase_5"/>
    <property type="match status" value="1"/>
</dbReference>
<dbReference type="SUPFAM" id="SSF52317">
    <property type="entry name" value="Class I glutamine amidotransferase-like"/>
    <property type="match status" value="1"/>
</dbReference>
<dbReference type="PROSITE" id="PS51273">
    <property type="entry name" value="GATASE_TYPE_1"/>
    <property type="match status" value="1"/>
</dbReference>
<accession>B2G5B7</accession>
<gene>
    <name evidence="1" type="primary">purQ</name>
    <name type="ordered locus">LAR_0133</name>
</gene>
<organism>
    <name type="scientific">Limosilactobacillus reuteri subsp. reuteri (strain JCM 1112)</name>
    <name type="common">Lactobacillus reuteri</name>
    <dbReference type="NCBI Taxonomy" id="557433"/>
    <lineage>
        <taxon>Bacteria</taxon>
        <taxon>Bacillati</taxon>
        <taxon>Bacillota</taxon>
        <taxon>Bacilli</taxon>
        <taxon>Lactobacillales</taxon>
        <taxon>Lactobacillaceae</taxon>
        <taxon>Limosilactobacillus</taxon>
    </lineage>
</organism>
<comment type="function">
    <text evidence="1">Part of the phosphoribosylformylglycinamidine synthase complex involved in the purines biosynthetic pathway. Catalyzes the ATP-dependent conversion of formylglycinamide ribonucleotide (FGAR) and glutamine to yield formylglycinamidine ribonucleotide (FGAM) and glutamate. The FGAM synthase complex is composed of three subunits. PurQ produces an ammonia molecule by converting glutamine to glutamate. PurL transfers the ammonia molecule to FGAR to form FGAM in an ATP-dependent manner. PurS interacts with PurQ and PurL and is thought to assist in the transfer of the ammonia molecule from PurQ to PurL.</text>
</comment>
<comment type="catalytic activity">
    <reaction evidence="1">
        <text>N(2)-formyl-N(1)-(5-phospho-beta-D-ribosyl)glycinamide + L-glutamine + ATP + H2O = 2-formamido-N(1)-(5-O-phospho-beta-D-ribosyl)acetamidine + L-glutamate + ADP + phosphate + H(+)</text>
        <dbReference type="Rhea" id="RHEA:17129"/>
        <dbReference type="ChEBI" id="CHEBI:15377"/>
        <dbReference type="ChEBI" id="CHEBI:15378"/>
        <dbReference type="ChEBI" id="CHEBI:29985"/>
        <dbReference type="ChEBI" id="CHEBI:30616"/>
        <dbReference type="ChEBI" id="CHEBI:43474"/>
        <dbReference type="ChEBI" id="CHEBI:58359"/>
        <dbReference type="ChEBI" id="CHEBI:147286"/>
        <dbReference type="ChEBI" id="CHEBI:147287"/>
        <dbReference type="ChEBI" id="CHEBI:456216"/>
        <dbReference type="EC" id="6.3.5.3"/>
    </reaction>
</comment>
<comment type="catalytic activity">
    <reaction evidence="1">
        <text>L-glutamine + H2O = L-glutamate + NH4(+)</text>
        <dbReference type="Rhea" id="RHEA:15889"/>
        <dbReference type="ChEBI" id="CHEBI:15377"/>
        <dbReference type="ChEBI" id="CHEBI:28938"/>
        <dbReference type="ChEBI" id="CHEBI:29985"/>
        <dbReference type="ChEBI" id="CHEBI:58359"/>
        <dbReference type="EC" id="3.5.1.2"/>
    </reaction>
</comment>
<comment type="pathway">
    <text evidence="1">Purine metabolism; IMP biosynthesis via de novo pathway; 5-amino-1-(5-phospho-D-ribosyl)imidazole from N(2)-formyl-N(1)-(5-phospho-D-ribosyl)glycinamide: step 1/2.</text>
</comment>
<comment type="subunit">
    <text evidence="1">Part of the FGAM synthase complex composed of 1 PurL, 1 PurQ and 2 PurS subunits.</text>
</comment>
<comment type="subcellular location">
    <subcellularLocation>
        <location evidence="1">Cytoplasm</location>
    </subcellularLocation>
</comment>